<reference key="1">
    <citation type="submission" date="2006-03" db="EMBL/GenBank/DDBJ databases">
        <title>Complete genome sequence of Gemmatimonas aurantiaca T-27 that represents a novel phylum Gemmatimonadetes.</title>
        <authorList>
            <person name="Takasaki K."/>
            <person name="Ichikawa N."/>
            <person name="Miura H."/>
            <person name="Matsushita S."/>
            <person name="Watanabe Y."/>
            <person name="Oguchi A."/>
            <person name="Ankai A."/>
            <person name="Yashiro I."/>
            <person name="Takahashi M."/>
            <person name="Terui Y."/>
            <person name="Fukui S."/>
            <person name="Yokoyama H."/>
            <person name="Tanikawa S."/>
            <person name="Hanada S."/>
            <person name="Kamagata Y."/>
            <person name="Fujita N."/>
        </authorList>
    </citation>
    <scope>NUCLEOTIDE SEQUENCE [LARGE SCALE GENOMIC DNA]</scope>
    <source>
        <strain>DSM 14586 / JCM 11422 / NBRC 100505 / T-27</strain>
    </source>
</reference>
<comment type="function">
    <text evidence="1">Binds directly to 23S rRNA. The L1 stalk is quite mobile in the ribosome, and is involved in E site tRNA release.</text>
</comment>
<comment type="function">
    <text evidence="1">Protein L1 is also a translational repressor protein, it controls the translation of the L11 operon by binding to its mRNA.</text>
</comment>
<comment type="subunit">
    <text evidence="1">Part of the 50S ribosomal subunit.</text>
</comment>
<comment type="similarity">
    <text evidence="1">Belongs to the universal ribosomal protein uL1 family.</text>
</comment>
<evidence type="ECO:0000255" key="1">
    <source>
        <dbReference type="HAMAP-Rule" id="MF_01318"/>
    </source>
</evidence>
<evidence type="ECO:0000305" key="2"/>
<keyword id="KW-1185">Reference proteome</keyword>
<keyword id="KW-0678">Repressor</keyword>
<keyword id="KW-0687">Ribonucleoprotein</keyword>
<keyword id="KW-0689">Ribosomal protein</keyword>
<keyword id="KW-0694">RNA-binding</keyword>
<keyword id="KW-0699">rRNA-binding</keyword>
<keyword id="KW-0810">Translation regulation</keyword>
<keyword id="KW-0820">tRNA-binding</keyword>
<organism>
    <name type="scientific">Gemmatimonas aurantiaca (strain DSM 14586 / JCM 11422 / NBRC 100505 / T-27)</name>
    <dbReference type="NCBI Taxonomy" id="379066"/>
    <lineage>
        <taxon>Bacteria</taxon>
        <taxon>Pseudomonadati</taxon>
        <taxon>Gemmatimonadota</taxon>
        <taxon>Gemmatimonadia</taxon>
        <taxon>Gemmatimonadales</taxon>
        <taxon>Gemmatimonadaceae</taxon>
        <taxon>Gemmatimonas</taxon>
    </lineage>
</organism>
<feature type="chain" id="PRO_1000214421" description="Large ribosomal subunit protein uL1">
    <location>
        <begin position="1"/>
        <end position="229"/>
    </location>
</feature>
<proteinExistence type="inferred from homology"/>
<accession>C1A6N4</accession>
<gene>
    <name evidence="1" type="primary">rplA</name>
    <name type="ordered locus">GAU_0852</name>
</gene>
<protein>
    <recommendedName>
        <fullName evidence="1">Large ribosomal subunit protein uL1</fullName>
    </recommendedName>
    <alternativeName>
        <fullName evidence="2">50S ribosomal protein L1</fullName>
    </alternativeName>
</protein>
<sequence length="229" mass="24514">MKTNGKKFRAASEQRVLGKSYEAKQAIALVKQMAFAKFDETVEIAIRLGVDPRHADQVVRGTVVLPAGTGKTMRVLVIATGAKVQEAQEAGADFVGTEFLQKIKDGWLDFDVMIATPDQMGQIGQLGRVLGPRGLMPNPKAGTVTFDVSKAVRESKGGKIEFRVDKGGNVHAPIGKVSFAPDQLETNFSALMDTIVRAKPAAAKGLYIRNVAISSSMGPGVTIDTTPFR</sequence>
<name>RL1_GEMAT</name>
<dbReference type="EMBL" id="AP009153">
    <property type="protein sequence ID" value="BAH37894.1"/>
    <property type="molecule type" value="Genomic_DNA"/>
</dbReference>
<dbReference type="RefSeq" id="WP_012682341.1">
    <property type="nucleotide sequence ID" value="NC_012489.1"/>
</dbReference>
<dbReference type="SMR" id="C1A6N4"/>
<dbReference type="STRING" id="379066.GAU_0852"/>
<dbReference type="KEGG" id="gau:GAU_0852"/>
<dbReference type="eggNOG" id="COG0081">
    <property type="taxonomic scope" value="Bacteria"/>
</dbReference>
<dbReference type="HOGENOM" id="CLU_062853_0_0_0"/>
<dbReference type="OrthoDB" id="9803740at2"/>
<dbReference type="Proteomes" id="UP000002209">
    <property type="component" value="Chromosome"/>
</dbReference>
<dbReference type="GO" id="GO:0015934">
    <property type="term" value="C:large ribosomal subunit"/>
    <property type="evidence" value="ECO:0007669"/>
    <property type="project" value="InterPro"/>
</dbReference>
<dbReference type="GO" id="GO:0019843">
    <property type="term" value="F:rRNA binding"/>
    <property type="evidence" value="ECO:0007669"/>
    <property type="project" value="UniProtKB-UniRule"/>
</dbReference>
<dbReference type="GO" id="GO:0003735">
    <property type="term" value="F:structural constituent of ribosome"/>
    <property type="evidence" value="ECO:0007669"/>
    <property type="project" value="InterPro"/>
</dbReference>
<dbReference type="GO" id="GO:0000049">
    <property type="term" value="F:tRNA binding"/>
    <property type="evidence" value="ECO:0007669"/>
    <property type="project" value="UniProtKB-KW"/>
</dbReference>
<dbReference type="GO" id="GO:0006417">
    <property type="term" value="P:regulation of translation"/>
    <property type="evidence" value="ECO:0007669"/>
    <property type="project" value="UniProtKB-KW"/>
</dbReference>
<dbReference type="GO" id="GO:0006412">
    <property type="term" value="P:translation"/>
    <property type="evidence" value="ECO:0007669"/>
    <property type="project" value="UniProtKB-UniRule"/>
</dbReference>
<dbReference type="CDD" id="cd00403">
    <property type="entry name" value="Ribosomal_L1"/>
    <property type="match status" value="1"/>
</dbReference>
<dbReference type="FunFam" id="3.40.50.790:FF:000001">
    <property type="entry name" value="50S ribosomal protein L1"/>
    <property type="match status" value="1"/>
</dbReference>
<dbReference type="Gene3D" id="3.30.190.20">
    <property type="match status" value="1"/>
</dbReference>
<dbReference type="Gene3D" id="3.40.50.790">
    <property type="match status" value="1"/>
</dbReference>
<dbReference type="HAMAP" id="MF_01318_B">
    <property type="entry name" value="Ribosomal_uL1_B"/>
    <property type="match status" value="1"/>
</dbReference>
<dbReference type="InterPro" id="IPR005878">
    <property type="entry name" value="Ribosom_uL1_bac-type"/>
</dbReference>
<dbReference type="InterPro" id="IPR002143">
    <property type="entry name" value="Ribosomal_uL1"/>
</dbReference>
<dbReference type="InterPro" id="IPR023674">
    <property type="entry name" value="Ribosomal_uL1-like"/>
</dbReference>
<dbReference type="InterPro" id="IPR028364">
    <property type="entry name" value="Ribosomal_uL1/biogenesis"/>
</dbReference>
<dbReference type="InterPro" id="IPR016095">
    <property type="entry name" value="Ribosomal_uL1_3-a/b-sand"/>
</dbReference>
<dbReference type="InterPro" id="IPR023673">
    <property type="entry name" value="Ribosomal_uL1_CS"/>
</dbReference>
<dbReference type="NCBIfam" id="TIGR01169">
    <property type="entry name" value="rplA_bact"/>
    <property type="match status" value="1"/>
</dbReference>
<dbReference type="PANTHER" id="PTHR36427">
    <property type="entry name" value="54S RIBOSOMAL PROTEIN L1, MITOCHONDRIAL"/>
    <property type="match status" value="1"/>
</dbReference>
<dbReference type="PANTHER" id="PTHR36427:SF3">
    <property type="entry name" value="LARGE RIBOSOMAL SUBUNIT PROTEIN UL1M"/>
    <property type="match status" value="1"/>
</dbReference>
<dbReference type="Pfam" id="PF00687">
    <property type="entry name" value="Ribosomal_L1"/>
    <property type="match status" value="1"/>
</dbReference>
<dbReference type="PIRSF" id="PIRSF002155">
    <property type="entry name" value="Ribosomal_L1"/>
    <property type="match status" value="1"/>
</dbReference>
<dbReference type="SUPFAM" id="SSF56808">
    <property type="entry name" value="Ribosomal protein L1"/>
    <property type="match status" value="1"/>
</dbReference>
<dbReference type="PROSITE" id="PS01199">
    <property type="entry name" value="RIBOSOMAL_L1"/>
    <property type="match status" value="1"/>
</dbReference>